<protein>
    <recommendedName>
        <fullName>Serpin A12</fullName>
    </recommendedName>
    <alternativeName>
        <fullName>Visceral adipose tissue-derived serine protease inhibitor</fullName>
        <shortName>Vaspin</shortName>
    </alternativeName>
    <alternativeName>
        <fullName>Visceral adipose-specific serpin</fullName>
    </alternativeName>
</protein>
<accession>Q7TMF5</accession>
<accession>Q9CQ32</accession>
<sequence length="413" mass="47634">MTRMLDLGLFLAGLLTVKGLLQDRDAPDMYDSPVRVQEWRGKKDARQLARHNMEFGFKLLQRLASNSPQGNIFLSPLSISTAFSMLSLGAQNSTLEEIREGFNFKEMSNWDVHAAFHYLLHKLNQETEDTKMNLGNALFMDQKLRPQQRFLNLAKNVYDADMVLTNFQDLENTQKDINRYISQKTHSRIKNMVKSIDPGTVMILTNYIYFRGRWQYEFDPKQTKEEEFFIEKGKTVKVPMMFQRGLYDMAYDSQLSCTILEIPYRGNITATFVLPDNGKLKLLEQGLQADIFAKWKSLLSKRVVDVWVPKLRISSTYNMKKVLSRLGISKIFEENGDLTRISSHRSLKVGEAVHKAELKMDEKGMEGAAGSGAQTLPMETPRHMKLDRPFLMMIYENFMPSMVFLARIYDPSG</sequence>
<keyword id="KW-0903">Direct protein sequencing</keyword>
<keyword id="KW-0325">Glycoprotein</keyword>
<keyword id="KW-0646">Protease inhibitor</keyword>
<keyword id="KW-1185">Reference proteome</keyword>
<keyword id="KW-0964">Secreted</keyword>
<keyword id="KW-0722">Serine protease inhibitor</keyword>
<keyword id="KW-0732">Signal</keyword>
<organism>
    <name type="scientific">Mus musculus</name>
    <name type="common">Mouse</name>
    <dbReference type="NCBI Taxonomy" id="10090"/>
    <lineage>
        <taxon>Eukaryota</taxon>
        <taxon>Metazoa</taxon>
        <taxon>Chordata</taxon>
        <taxon>Craniata</taxon>
        <taxon>Vertebrata</taxon>
        <taxon>Euteleostomi</taxon>
        <taxon>Mammalia</taxon>
        <taxon>Eutheria</taxon>
        <taxon>Euarchontoglires</taxon>
        <taxon>Glires</taxon>
        <taxon>Rodentia</taxon>
        <taxon>Myomorpha</taxon>
        <taxon>Muroidea</taxon>
        <taxon>Muridae</taxon>
        <taxon>Murinae</taxon>
        <taxon>Mus</taxon>
        <taxon>Mus</taxon>
    </lineage>
</organism>
<evidence type="ECO:0000250" key="1">
    <source>
        <dbReference type="UniProtKB" id="Q8IW75"/>
    </source>
</evidence>
<evidence type="ECO:0000255" key="2"/>
<evidence type="ECO:0000269" key="3">
    <source>
    </source>
</evidence>
<evidence type="ECO:0000269" key="4">
    <source>
    </source>
</evidence>
<evidence type="ECO:0000305" key="5"/>
<comment type="function">
    <text evidence="3 4">Adipokine that modulates insulin action by specifically inhibiting its target protease KLK7 in white adipose tissues.</text>
</comment>
<comment type="activity regulation">
    <text evidence="1">Inhibition of KLK7 is enhanced by heparin.</text>
</comment>
<comment type="subunit">
    <text evidence="1">Forms a stable complex with KLK7.</text>
</comment>
<comment type="subcellular location">
    <subcellularLocation>
        <location evidence="4">Secreted</location>
    </subcellularLocation>
</comment>
<comment type="tissue specificity">
    <text evidence="3">Expressed in visceral adipose tissues.</text>
</comment>
<comment type="domain">
    <text evidence="1">The reactive center loop (RCL) extends out from the body of the protein and directs binding to the target protease. The protease cleaves the serpin at the reactive site within the RCL, establishing a covalent linkage between the carboxyl group of the serpin reactive site and the serine hydroxyl of the protease. The resulting inactive serpin-protease complex is highly stable.</text>
</comment>
<comment type="PTM">
    <text evidence="1">Glycosylation slightly decreases affinity for heparin, but otherwise has no significant effect on KLK7 inhibitory activity or thermal stability of the protein.</text>
</comment>
<comment type="similarity">
    <text evidence="5">Belongs to the serpin family.</text>
</comment>
<dbReference type="EMBL" id="AY326419">
    <property type="protein sequence ID" value="AAP88383.1"/>
    <property type="molecule type" value="mRNA"/>
</dbReference>
<dbReference type="EMBL" id="AK014346">
    <property type="protein sequence ID" value="BAB29287.1"/>
    <property type="molecule type" value="mRNA"/>
</dbReference>
<dbReference type="EMBL" id="AK014589">
    <property type="protein sequence ID" value="BAB29447.1"/>
    <property type="molecule type" value="mRNA"/>
</dbReference>
<dbReference type="CCDS" id="CCDS26145.1"/>
<dbReference type="RefSeq" id="NP_080811.1">
    <property type="nucleotide sequence ID" value="NM_026535.2"/>
</dbReference>
<dbReference type="SMR" id="Q7TMF5"/>
<dbReference type="BioGRID" id="212632">
    <property type="interactions" value="7"/>
</dbReference>
<dbReference type="FunCoup" id="Q7TMF5">
    <property type="interactions" value="112"/>
</dbReference>
<dbReference type="STRING" id="10090.ENSMUSP00000045572"/>
<dbReference type="MEROPS" id="I04.091"/>
<dbReference type="GlyCosmos" id="Q7TMF5">
    <property type="glycosylation" value="2 sites, No reported glycans"/>
</dbReference>
<dbReference type="GlyGen" id="Q7TMF5">
    <property type="glycosylation" value="2 sites"/>
</dbReference>
<dbReference type="PhosphoSitePlus" id="Q7TMF5"/>
<dbReference type="jPOST" id="Q7TMF5"/>
<dbReference type="PaxDb" id="10090-ENSMUSP00000045572"/>
<dbReference type="ProteomicsDB" id="261489"/>
<dbReference type="Antibodypedia" id="27079">
    <property type="antibodies" value="373 antibodies from 32 providers"/>
</dbReference>
<dbReference type="DNASU" id="68054"/>
<dbReference type="Ensembl" id="ENSMUST00000043915.4">
    <property type="protein sequence ID" value="ENSMUSP00000045572.4"/>
    <property type="gene ID" value="ENSMUSG00000041567.4"/>
</dbReference>
<dbReference type="GeneID" id="68054"/>
<dbReference type="KEGG" id="mmu:68054"/>
<dbReference type="UCSC" id="uc007owp.1">
    <property type="organism name" value="mouse"/>
</dbReference>
<dbReference type="AGR" id="MGI:1915304"/>
<dbReference type="CTD" id="145264"/>
<dbReference type="MGI" id="MGI:1915304">
    <property type="gene designation" value="Serpina12"/>
</dbReference>
<dbReference type="VEuPathDB" id="HostDB:ENSMUSG00000041567"/>
<dbReference type="eggNOG" id="KOG2392">
    <property type="taxonomic scope" value="Eukaryota"/>
</dbReference>
<dbReference type="GeneTree" id="ENSGT00940000161977"/>
<dbReference type="HOGENOM" id="CLU_023330_2_1_1"/>
<dbReference type="InParanoid" id="Q7TMF5"/>
<dbReference type="OMA" id="MFRGGMY"/>
<dbReference type="OrthoDB" id="671595at2759"/>
<dbReference type="PhylomeDB" id="Q7TMF5"/>
<dbReference type="TreeFam" id="TF343201"/>
<dbReference type="BioGRID-ORCS" id="68054">
    <property type="hits" value="2 hits in 77 CRISPR screens"/>
</dbReference>
<dbReference type="ChiTaRS" id="Serpina12">
    <property type="organism name" value="mouse"/>
</dbReference>
<dbReference type="PRO" id="PR:Q7TMF5"/>
<dbReference type="Proteomes" id="UP000000589">
    <property type="component" value="Chromosome 12"/>
</dbReference>
<dbReference type="RNAct" id="Q7TMF5">
    <property type="molecule type" value="protein"/>
</dbReference>
<dbReference type="Bgee" id="ENSMUSG00000041567">
    <property type="expression patterns" value="Expressed in tail skin and 26 other cell types or tissues"/>
</dbReference>
<dbReference type="GO" id="GO:0005615">
    <property type="term" value="C:extracellular space"/>
    <property type="evidence" value="ECO:0000314"/>
    <property type="project" value="MGI"/>
</dbReference>
<dbReference type="GO" id="GO:0005886">
    <property type="term" value="C:plasma membrane"/>
    <property type="evidence" value="ECO:0000314"/>
    <property type="project" value="MGI"/>
</dbReference>
<dbReference type="GO" id="GO:0004867">
    <property type="term" value="F:serine-type endopeptidase inhibitor activity"/>
    <property type="evidence" value="ECO:0007669"/>
    <property type="project" value="UniProtKB-KW"/>
</dbReference>
<dbReference type="GO" id="GO:0006094">
    <property type="term" value="P:gluconeogenesis"/>
    <property type="evidence" value="ECO:0000314"/>
    <property type="project" value="MGI"/>
</dbReference>
<dbReference type="GO" id="GO:0008610">
    <property type="term" value="P:lipid biosynthetic process"/>
    <property type="evidence" value="ECO:0000314"/>
    <property type="project" value="MGI"/>
</dbReference>
<dbReference type="GO" id="GO:0045721">
    <property type="term" value="P:negative regulation of gluconeogenesis"/>
    <property type="evidence" value="ECO:0000314"/>
    <property type="project" value="MGI"/>
</dbReference>
<dbReference type="GO" id="GO:0051055">
    <property type="term" value="P:negative regulation of lipid biosynthetic process"/>
    <property type="evidence" value="ECO:0000314"/>
    <property type="project" value="MGI"/>
</dbReference>
<dbReference type="GO" id="GO:0043491">
    <property type="term" value="P:phosphatidylinositol 3-kinase/protein kinase B signal transduction"/>
    <property type="evidence" value="ECO:0000315"/>
    <property type="project" value="MGI"/>
</dbReference>
<dbReference type="GO" id="GO:0046628">
    <property type="term" value="P:positive regulation of insulin receptor signaling pathway"/>
    <property type="evidence" value="ECO:0000315"/>
    <property type="project" value="MGI"/>
</dbReference>
<dbReference type="GO" id="GO:0051897">
    <property type="term" value="P:positive regulation of phosphatidylinositol 3-kinase/protein kinase B signal transduction"/>
    <property type="evidence" value="ECO:0000315"/>
    <property type="project" value="MGI"/>
</dbReference>
<dbReference type="GO" id="GO:0090181">
    <property type="term" value="P:regulation of cholesterol metabolic process"/>
    <property type="evidence" value="ECO:0000315"/>
    <property type="project" value="MGI"/>
</dbReference>
<dbReference type="GO" id="GO:0090207">
    <property type="term" value="P:regulation of triglyceride metabolic process"/>
    <property type="evidence" value="ECO:0000315"/>
    <property type="project" value="MGI"/>
</dbReference>
<dbReference type="CDD" id="cd19558">
    <property type="entry name" value="serpinA12_vaspin"/>
    <property type="match status" value="1"/>
</dbReference>
<dbReference type="FunFam" id="3.30.497.10:FF:000001">
    <property type="entry name" value="Serine protease inhibitor"/>
    <property type="match status" value="1"/>
</dbReference>
<dbReference type="FunFam" id="2.30.39.10:FF:000002">
    <property type="entry name" value="Serpin family D member 1"/>
    <property type="match status" value="1"/>
</dbReference>
<dbReference type="Gene3D" id="2.30.39.10">
    <property type="entry name" value="Alpha-1-antitrypsin, domain 1"/>
    <property type="match status" value="1"/>
</dbReference>
<dbReference type="Gene3D" id="3.30.497.10">
    <property type="entry name" value="Antithrombin, subunit I, domain 2"/>
    <property type="match status" value="1"/>
</dbReference>
<dbReference type="InterPro" id="IPR023795">
    <property type="entry name" value="Serpin_CS"/>
</dbReference>
<dbReference type="InterPro" id="IPR023796">
    <property type="entry name" value="Serpin_dom"/>
</dbReference>
<dbReference type="InterPro" id="IPR000215">
    <property type="entry name" value="Serpin_fam"/>
</dbReference>
<dbReference type="InterPro" id="IPR036186">
    <property type="entry name" value="Serpin_sf"/>
</dbReference>
<dbReference type="InterPro" id="IPR042178">
    <property type="entry name" value="Serpin_sf_1"/>
</dbReference>
<dbReference type="InterPro" id="IPR042185">
    <property type="entry name" value="Serpin_sf_2"/>
</dbReference>
<dbReference type="PANTHER" id="PTHR11461">
    <property type="entry name" value="SERINE PROTEASE INHIBITOR, SERPIN"/>
    <property type="match status" value="1"/>
</dbReference>
<dbReference type="PANTHER" id="PTHR11461:SF157">
    <property type="entry name" value="SERPIN A12"/>
    <property type="match status" value="1"/>
</dbReference>
<dbReference type="Pfam" id="PF00079">
    <property type="entry name" value="Serpin"/>
    <property type="match status" value="1"/>
</dbReference>
<dbReference type="PRINTS" id="PR00780">
    <property type="entry name" value="LEUSERPINII"/>
</dbReference>
<dbReference type="SMART" id="SM00093">
    <property type="entry name" value="SERPIN"/>
    <property type="match status" value="1"/>
</dbReference>
<dbReference type="SUPFAM" id="SSF56574">
    <property type="entry name" value="Serpins"/>
    <property type="match status" value="1"/>
</dbReference>
<dbReference type="PROSITE" id="PS00284">
    <property type="entry name" value="SERPIN"/>
    <property type="match status" value="1"/>
</dbReference>
<name>SPA12_MOUSE</name>
<feature type="signal peptide" evidence="3">
    <location>
        <begin position="1"/>
        <end position="20"/>
    </location>
</feature>
<feature type="chain" id="PRO_0000041977" description="Serpin A12">
    <location>
        <begin position="21"/>
        <end position="413"/>
    </location>
</feature>
<feature type="region of interest" description="Reactive center loop" evidence="1">
    <location>
        <begin position="364"/>
        <end position="382"/>
    </location>
</feature>
<feature type="site" description="Cleavage" evidence="1">
    <location>
        <begin position="378"/>
        <end position="379"/>
    </location>
</feature>
<feature type="glycosylation site" description="N-linked (GlcNAc...) asparagine" evidence="2">
    <location>
        <position position="92"/>
    </location>
</feature>
<feature type="glycosylation site" description="N-linked (GlcNAc...) asparagine" evidence="2">
    <location>
        <position position="267"/>
    </location>
</feature>
<feature type="sequence conflict" description="In Ref. 1; AAP88383." evidence="5" ref="1">
    <original>Q</original>
    <variation>R</variation>
    <location>
        <position position="69"/>
    </location>
</feature>
<feature type="sequence conflict" description="In Ref. 1; AAP88383." evidence="5" ref="1">
    <original>W</original>
    <variation>R</variation>
    <location>
        <position position="110"/>
    </location>
</feature>
<feature type="sequence conflict" description="In Ref. 1; AAP88383." evidence="5" ref="1">
    <original>Q</original>
    <variation>R</variation>
    <location>
        <position position="183"/>
    </location>
</feature>
<feature type="sequence conflict" description="In Ref. 1; AAP88383." evidence="5" ref="1">
    <original>V</original>
    <variation>I</variation>
    <location>
        <position position="403"/>
    </location>
</feature>
<reference key="1">
    <citation type="journal article" date="2005" name="Proc. Natl. Acad. Sci. U.S.A.">
        <title>Visceral adipose tissue-derived serine protease inhibitor: a unique insulin-sensitizing adipocytokine in obesity.</title>
        <authorList>
            <person name="Hida K."/>
            <person name="Wada J."/>
            <person name="Eguchi J."/>
            <person name="Zhang H."/>
            <person name="Baba M."/>
            <person name="Seida A."/>
            <person name="Hashimoto I."/>
            <person name="Okada T."/>
            <person name="Yasuhara A."/>
            <person name="Nakatsuka A."/>
            <person name="Shikata K."/>
            <person name="Hourai S."/>
            <person name="Futami J."/>
            <person name="Watanabe E."/>
            <person name="Matsuki Y."/>
            <person name="Hiramatsu R."/>
            <person name="Akagi S."/>
            <person name="Makino H."/>
            <person name="Kanwar Y.S."/>
        </authorList>
    </citation>
    <scope>NUCLEOTIDE SEQUENCE [MRNA]</scope>
    <scope>FUNCTION</scope>
    <scope>PROTEIN SEQUENCE OF N-TERMINUS</scope>
    <scope>TISSUE SPECIFICITY</scope>
    <source>
        <strain>Swiss Webster</strain>
    </source>
</reference>
<reference key="2">
    <citation type="journal article" date="2005" name="Science">
        <title>The transcriptional landscape of the mammalian genome.</title>
        <authorList>
            <person name="Carninci P."/>
            <person name="Kasukawa T."/>
            <person name="Katayama S."/>
            <person name="Gough J."/>
            <person name="Frith M.C."/>
            <person name="Maeda N."/>
            <person name="Oyama R."/>
            <person name="Ravasi T."/>
            <person name="Lenhard B."/>
            <person name="Wells C."/>
            <person name="Kodzius R."/>
            <person name="Shimokawa K."/>
            <person name="Bajic V.B."/>
            <person name="Brenner S.E."/>
            <person name="Batalov S."/>
            <person name="Forrest A.R."/>
            <person name="Zavolan M."/>
            <person name="Davis M.J."/>
            <person name="Wilming L.G."/>
            <person name="Aidinis V."/>
            <person name="Allen J.E."/>
            <person name="Ambesi-Impiombato A."/>
            <person name="Apweiler R."/>
            <person name="Aturaliya R.N."/>
            <person name="Bailey T.L."/>
            <person name="Bansal M."/>
            <person name="Baxter L."/>
            <person name="Beisel K.W."/>
            <person name="Bersano T."/>
            <person name="Bono H."/>
            <person name="Chalk A.M."/>
            <person name="Chiu K.P."/>
            <person name="Choudhary V."/>
            <person name="Christoffels A."/>
            <person name="Clutterbuck D.R."/>
            <person name="Crowe M.L."/>
            <person name="Dalla E."/>
            <person name="Dalrymple B.P."/>
            <person name="de Bono B."/>
            <person name="Della Gatta G."/>
            <person name="di Bernardo D."/>
            <person name="Down T."/>
            <person name="Engstrom P."/>
            <person name="Fagiolini M."/>
            <person name="Faulkner G."/>
            <person name="Fletcher C.F."/>
            <person name="Fukushima T."/>
            <person name="Furuno M."/>
            <person name="Futaki S."/>
            <person name="Gariboldi M."/>
            <person name="Georgii-Hemming P."/>
            <person name="Gingeras T.R."/>
            <person name="Gojobori T."/>
            <person name="Green R.E."/>
            <person name="Gustincich S."/>
            <person name="Harbers M."/>
            <person name="Hayashi Y."/>
            <person name="Hensch T.K."/>
            <person name="Hirokawa N."/>
            <person name="Hill D."/>
            <person name="Huminiecki L."/>
            <person name="Iacono M."/>
            <person name="Ikeo K."/>
            <person name="Iwama A."/>
            <person name="Ishikawa T."/>
            <person name="Jakt M."/>
            <person name="Kanapin A."/>
            <person name="Katoh M."/>
            <person name="Kawasawa Y."/>
            <person name="Kelso J."/>
            <person name="Kitamura H."/>
            <person name="Kitano H."/>
            <person name="Kollias G."/>
            <person name="Krishnan S.P."/>
            <person name="Kruger A."/>
            <person name="Kummerfeld S.K."/>
            <person name="Kurochkin I.V."/>
            <person name="Lareau L.F."/>
            <person name="Lazarevic D."/>
            <person name="Lipovich L."/>
            <person name="Liu J."/>
            <person name="Liuni S."/>
            <person name="McWilliam S."/>
            <person name="Madan Babu M."/>
            <person name="Madera M."/>
            <person name="Marchionni L."/>
            <person name="Matsuda H."/>
            <person name="Matsuzawa S."/>
            <person name="Miki H."/>
            <person name="Mignone F."/>
            <person name="Miyake S."/>
            <person name="Morris K."/>
            <person name="Mottagui-Tabar S."/>
            <person name="Mulder N."/>
            <person name="Nakano N."/>
            <person name="Nakauchi H."/>
            <person name="Ng P."/>
            <person name="Nilsson R."/>
            <person name="Nishiguchi S."/>
            <person name="Nishikawa S."/>
            <person name="Nori F."/>
            <person name="Ohara O."/>
            <person name="Okazaki Y."/>
            <person name="Orlando V."/>
            <person name="Pang K.C."/>
            <person name="Pavan W.J."/>
            <person name="Pavesi G."/>
            <person name="Pesole G."/>
            <person name="Petrovsky N."/>
            <person name="Piazza S."/>
            <person name="Reed J."/>
            <person name="Reid J.F."/>
            <person name="Ring B.Z."/>
            <person name="Ringwald M."/>
            <person name="Rost B."/>
            <person name="Ruan Y."/>
            <person name="Salzberg S.L."/>
            <person name="Sandelin A."/>
            <person name="Schneider C."/>
            <person name="Schoenbach C."/>
            <person name="Sekiguchi K."/>
            <person name="Semple C.A."/>
            <person name="Seno S."/>
            <person name="Sessa L."/>
            <person name="Sheng Y."/>
            <person name="Shibata Y."/>
            <person name="Shimada H."/>
            <person name="Shimada K."/>
            <person name="Silva D."/>
            <person name="Sinclair B."/>
            <person name="Sperling S."/>
            <person name="Stupka E."/>
            <person name="Sugiura K."/>
            <person name="Sultana R."/>
            <person name="Takenaka Y."/>
            <person name="Taki K."/>
            <person name="Tammoja K."/>
            <person name="Tan S.L."/>
            <person name="Tang S."/>
            <person name="Taylor M.S."/>
            <person name="Tegner J."/>
            <person name="Teichmann S.A."/>
            <person name="Ueda H.R."/>
            <person name="van Nimwegen E."/>
            <person name="Verardo R."/>
            <person name="Wei C.L."/>
            <person name="Yagi K."/>
            <person name="Yamanishi H."/>
            <person name="Zabarovsky E."/>
            <person name="Zhu S."/>
            <person name="Zimmer A."/>
            <person name="Hide W."/>
            <person name="Bult C."/>
            <person name="Grimmond S.M."/>
            <person name="Teasdale R.D."/>
            <person name="Liu E.T."/>
            <person name="Brusic V."/>
            <person name="Quackenbush J."/>
            <person name="Wahlestedt C."/>
            <person name="Mattick J.S."/>
            <person name="Hume D.A."/>
            <person name="Kai C."/>
            <person name="Sasaki D."/>
            <person name="Tomaru Y."/>
            <person name="Fukuda S."/>
            <person name="Kanamori-Katayama M."/>
            <person name="Suzuki M."/>
            <person name="Aoki J."/>
            <person name="Arakawa T."/>
            <person name="Iida J."/>
            <person name="Imamura K."/>
            <person name="Itoh M."/>
            <person name="Kato T."/>
            <person name="Kawaji H."/>
            <person name="Kawagashira N."/>
            <person name="Kawashima T."/>
            <person name="Kojima M."/>
            <person name="Kondo S."/>
            <person name="Konno H."/>
            <person name="Nakano K."/>
            <person name="Ninomiya N."/>
            <person name="Nishio T."/>
            <person name="Okada M."/>
            <person name="Plessy C."/>
            <person name="Shibata K."/>
            <person name="Shiraki T."/>
            <person name="Suzuki S."/>
            <person name="Tagami M."/>
            <person name="Waki K."/>
            <person name="Watahiki A."/>
            <person name="Okamura-Oho Y."/>
            <person name="Suzuki H."/>
            <person name="Kawai J."/>
            <person name="Hayashizaki Y."/>
        </authorList>
    </citation>
    <scope>NUCLEOTIDE SEQUENCE [LARGE SCALE MRNA]</scope>
    <source>
        <strain>C57BL/6J</strain>
        <tissue>Head</tissue>
        <tissue>Skin</tissue>
    </source>
</reference>
<reference key="3">
    <citation type="journal article" date="2013" name="Cell. Mol. Life Sci.">
        <title>Vaspin inhibits kallikrein 7 by serpin mechanism.</title>
        <authorList>
            <person name="Heiker J.T."/>
            <person name="Kloting N."/>
            <person name="Kovacs P."/>
            <person name="Kuettner E.B."/>
            <person name="Strater N."/>
            <person name="Schultz S."/>
            <person name="Kern M."/>
            <person name="Stumvoll M."/>
            <person name="Bluher M."/>
            <person name="Beck-Sickinger A.G."/>
        </authorList>
    </citation>
    <scope>FUNCTION</scope>
    <scope>SUBCELLULAR LOCATION</scope>
</reference>
<gene>
    <name type="primary">Serpina12</name>
</gene>
<proteinExistence type="evidence at protein level"/>